<protein>
    <recommendedName>
        <fullName>Uncharacterized mitochondrial protein AtMg00890</fullName>
    </recommendedName>
    <alternativeName>
        <fullName>ORF106d</fullName>
    </alternativeName>
</protein>
<organism>
    <name type="scientific">Arabidopsis thaliana</name>
    <name type="common">Mouse-ear cress</name>
    <dbReference type="NCBI Taxonomy" id="3702"/>
    <lineage>
        <taxon>Eukaryota</taxon>
        <taxon>Viridiplantae</taxon>
        <taxon>Streptophyta</taxon>
        <taxon>Embryophyta</taxon>
        <taxon>Tracheophyta</taxon>
        <taxon>Spermatophyta</taxon>
        <taxon>Magnoliopsida</taxon>
        <taxon>eudicotyledons</taxon>
        <taxon>Gunneridae</taxon>
        <taxon>Pentapetalae</taxon>
        <taxon>rosids</taxon>
        <taxon>malvids</taxon>
        <taxon>Brassicales</taxon>
        <taxon>Brassicaceae</taxon>
        <taxon>Camelineae</taxon>
        <taxon>Arabidopsis</taxon>
    </lineage>
</organism>
<evidence type="ECO:0000256" key="1">
    <source>
        <dbReference type="SAM" id="MobiDB-lite"/>
    </source>
</evidence>
<evidence type="ECO:0000305" key="2"/>
<proteinExistence type="predicted"/>
<name>M890_ARATH</name>
<geneLocation type="mitochondrion"/>
<reference key="1">
    <citation type="journal article" date="1997" name="Nat. Genet.">
        <title>The mitochondrial genome of Arabidopsis thaliana contains 57 genes in 366,924 nucleotides.</title>
        <authorList>
            <person name="Unseld M."/>
            <person name="Marienfeld J.R."/>
            <person name="Brandt P."/>
            <person name="Brennicke A."/>
        </authorList>
    </citation>
    <scope>NUCLEOTIDE SEQUENCE [LARGE SCALE GENOMIC DNA]</scope>
    <source>
        <strain>cv. C24</strain>
    </source>
</reference>
<reference key="2">
    <citation type="journal article" date="2018" name="Plant Cell">
        <title>Correction of persistent errors in Arabidopsis reference mitochondrial genomes.</title>
        <authorList>
            <person name="Sloan D.B."/>
            <person name="Wu Z."/>
            <person name="Sharbrough J."/>
        </authorList>
    </citation>
    <scope>NUCLEOTIDE SEQUENCE [LARGE SCALE GENOMIC DNA]</scope>
    <source>
        <strain>cv. Columbia</strain>
    </source>
</reference>
<reference key="3">
    <citation type="journal article" date="1999" name="Nature">
        <title>Sequence and analysis of chromosome 2 of the plant Arabidopsis thaliana.</title>
        <authorList>
            <person name="Lin X."/>
            <person name="Kaul S."/>
            <person name="Rounsley S.D."/>
            <person name="Shea T.P."/>
            <person name="Benito M.-I."/>
            <person name="Town C.D."/>
            <person name="Fujii C.Y."/>
            <person name="Mason T.M."/>
            <person name="Bowman C.L."/>
            <person name="Barnstead M.E."/>
            <person name="Feldblyum T.V."/>
            <person name="Buell C.R."/>
            <person name="Ketchum K.A."/>
            <person name="Lee J.J."/>
            <person name="Ronning C.M."/>
            <person name="Koo H.L."/>
            <person name="Moffat K.S."/>
            <person name="Cronin L.A."/>
            <person name="Shen M."/>
            <person name="Pai G."/>
            <person name="Van Aken S."/>
            <person name="Umayam L."/>
            <person name="Tallon L.J."/>
            <person name="Gill J.E."/>
            <person name="Adams M.D."/>
            <person name="Carrera A.J."/>
            <person name="Creasy T.H."/>
            <person name="Goodman H.M."/>
            <person name="Somerville C.R."/>
            <person name="Copenhaver G.P."/>
            <person name="Preuss D."/>
            <person name="Nierman W.C."/>
            <person name="White O."/>
            <person name="Eisen J.A."/>
            <person name="Salzberg S.L."/>
            <person name="Fraser C.M."/>
            <person name="Venter J.C."/>
        </authorList>
    </citation>
    <scope>NUCLEOTIDE SEQUENCE [LARGE SCALE GENOMIC DNA]</scope>
    <source>
        <strain>cv. Columbia</strain>
    </source>
</reference>
<sequence>MHLERSVQSQLTESKEIARPYSLWGISLAQHSFKTSTRSTGKKRSKGSTSQDGKKQESLESRNDLGPTIVGLIRKILSYSSKKEFSNLTGLESGGSSPPFSLAVSK</sequence>
<keyword id="KW-0496">Mitochondrion</keyword>
<keyword id="KW-1185">Reference proteome</keyword>
<accession>P92526</accession>
<accession>Q1ZXY6</accession>
<feature type="chain" id="PRO_0000196799" description="Uncharacterized mitochondrial protein AtMg00890">
    <location>
        <begin position="1"/>
        <end position="106"/>
    </location>
</feature>
<feature type="region of interest" description="Disordered" evidence="1">
    <location>
        <begin position="33"/>
        <end position="64"/>
    </location>
</feature>
<feature type="region of interest" description="Disordered" evidence="1">
    <location>
        <begin position="87"/>
        <end position="106"/>
    </location>
</feature>
<feature type="compositionally biased region" description="Basic and acidic residues" evidence="1">
    <location>
        <begin position="52"/>
        <end position="63"/>
    </location>
</feature>
<feature type="compositionally biased region" description="Polar residues" evidence="1">
    <location>
        <begin position="87"/>
        <end position="99"/>
    </location>
</feature>
<dbReference type="EMBL" id="Y08501">
    <property type="protein sequence ID" value="CAA69831.1"/>
    <property type="molecule type" value="Genomic_DNA"/>
</dbReference>
<dbReference type="EMBL" id="BK010421">
    <property type="status" value="NOT_ANNOTATED_CDS"/>
    <property type="molecule type" value="Genomic_DNA"/>
</dbReference>
<dbReference type="EMBL" id="AC007143">
    <property type="status" value="NOT_ANNOTATED_CDS"/>
    <property type="molecule type" value="Genomic_DNA"/>
</dbReference>
<dbReference type="EMBL" id="AC007730">
    <property type="status" value="NOT_ANNOTATED_CDS"/>
    <property type="molecule type" value="Genomic_DNA"/>
</dbReference>
<dbReference type="RefSeq" id="NP_085545.1">
    <property type="nucleotide sequence ID" value="NC_001284.2"/>
</dbReference>
<dbReference type="SMR" id="P92526"/>
<dbReference type="PaxDb" id="3702-ATMG00890.1"/>
<dbReference type="EnsemblPlants" id="ATMG00890.1">
    <property type="protein sequence ID" value="ATMG00890.1"/>
    <property type="gene ID" value="ATMG00890"/>
</dbReference>
<dbReference type="Gramene" id="ATMG00890.1">
    <property type="protein sequence ID" value="ATMG00890.1"/>
    <property type="gene ID" value="ATMG00890"/>
</dbReference>
<dbReference type="Araport" id="ATMG00890"/>
<dbReference type="TAIR" id="ATMG00890">
    <property type="gene designation" value="ORF106D"/>
</dbReference>
<dbReference type="HOGENOM" id="CLU_2226835_0_0_1"/>
<dbReference type="InParanoid" id="P92526"/>
<dbReference type="PRO" id="PR:P92526"/>
<dbReference type="Proteomes" id="UP000006548">
    <property type="component" value="Mitochondrion MT"/>
</dbReference>
<dbReference type="GO" id="GO:0005739">
    <property type="term" value="C:mitochondrion"/>
    <property type="evidence" value="ECO:0007669"/>
    <property type="project" value="UniProtKB-SubCell"/>
</dbReference>
<comment type="subcellular location">
    <subcellularLocation>
        <location evidence="2">Mitochondrion</location>
    </subcellularLocation>
</comment>
<comment type="miscellaneous">
    <text>A stretch of 270 kb of the mitochondrial genome is duplicated within the centromere of chromosome 2 resulting in the duplication of the gene. The expression of this duplicated gene is not demonstrated.</text>
</comment>
<gene>
    <name type="ordered locus">AtMg00890</name>
</gene>